<proteinExistence type="inferred from homology"/>
<reference key="1">
    <citation type="journal article" date="2009" name="Genome Res.">
        <title>Newly introduced genomic prophage islands are critical determinants of in vivo competitiveness in the Liverpool epidemic strain of Pseudomonas aeruginosa.</title>
        <authorList>
            <person name="Winstanley C."/>
            <person name="Langille M.G.I."/>
            <person name="Fothergill J.L."/>
            <person name="Kukavica-Ibrulj I."/>
            <person name="Paradis-Bleau C."/>
            <person name="Sanschagrin F."/>
            <person name="Thomson N.R."/>
            <person name="Winsor G.L."/>
            <person name="Quail M.A."/>
            <person name="Lennard N."/>
            <person name="Bignell A."/>
            <person name="Clarke L."/>
            <person name="Seeger K."/>
            <person name="Saunders D."/>
            <person name="Harris D."/>
            <person name="Parkhill J."/>
            <person name="Hancock R.E.W."/>
            <person name="Brinkman F.S.L."/>
            <person name="Levesque R.C."/>
        </authorList>
    </citation>
    <scope>NUCLEOTIDE SEQUENCE [LARGE SCALE GENOMIC DNA]</scope>
    <source>
        <strain>LESB58</strain>
    </source>
</reference>
<comment type="function">
    <text evidence="1">Responsible for the release of ribosomes from messenger RNA at the termination of protein biosynthesis. May increase the efficiency of translation by recycling ribosomes from one round of translation to another.</text>
</comment>
<comment type="subcellular location">
    <subcellularLocation>
        <location evidence="1">Cytoplasm</location>
    </subcellularLocation>
</comment>
<comment type="similarity">
    <text evidence="1">Belongs to the RRF family.</text>
</comment>
<name>RRF_PSEA8</name>
<organism>
    <name type="scientific">Pseudomonas aeruginosa (strain LESB58)</name>
    <dbReference type="NCBI Taxonomy" id="557722"/>
    <lineage>
        <taxon>Bacteria</taxon>
        <taxon>Pseudomonadati</taxon>
        <taxon>Pseudomonadota</taxon>
        <taxon>Gammaproteobacteria</taxon>
        <taxon>Pseudomonadales</taxon>
        <taxon>Pseudomonadaceae</taxon>
        <taxon>Pseudomonas</taxon>
    </lineage>
</organism>
<protein>
    <recommendedName>
        <fullName evidence="1">Ribosome-recycling factor</fullName>
        <shortName evidence="1">RRF</shortName>
    </recommendedName>
    <alternativeName>
        <fullName evidence="1">Ribosome-releasing factor</fullName>
    </alternativeName>
</protein>
<sequence length="185" mass="20485">MINEIKKEAQERMGKTLEALGHAFAKIRTGRAHPSILDSVMVSYYGADTPLRQVANVTVEDSRTLALAVFDKSMIQAVEKAIMTSDLGLNPATAGTTIRVPMPALTEETRKGYTKQARAEAEQARVSVRNIRRDALAQLKDLQKEKEISEDEERRAGDDVQKLTDKFIGEIEKALEAKEADLMAV</sequence>
<keyword id="KW-0963">Cytoplasm</keyword>
<keyword id="KW-0648">Protein biosynthesis</keyword>
<gene>
    <name evidence="1" type="primary">frr</name>
    <name type="ordered locus">PLES_13821</name>
</gene>
<feature type="chain" id="PRO_1000194945" description="Ribosome-recycling factor">
    <location>
        <begin position="1"/>
        <end position="185"/>
    </location>
</feature>
<evidence type="ECO:0000255" key="1">
    <source>
        <dbReference type="HAMAP-Rule" id="MF_00040"/>
    </source>
</evidence>
<dbReference type="EMBL" id="FM209186">
    <property type="protein sequence ID" value="CAW26110.1"/>
    <property type="molecule type" value="Genomic_DNA"/>
</dbReference>
<dbReference type="RefSeq" id="WP_003092390.1">
    <property type="nucleotide sequence ID" value="NC_011770.1"/>
</dbReference>
<dbReference type="BMRB" id="B7V7G0"/>
<dbReference type="SMR" id="B7V7G0"/>
<dbReference type="KEGG" id="pag:PLES_13821"/>
<dbReference type="HOGENOM" id="CLU_073981_2_1_6"/>
<dbReference type="GO" id="GO:0005829">
    <property type="term" value="C:cytosol"/>
    <property type="evidence" value="ECO:0007669"/>
    <property type="project" value="GOC"/>
</dbReference>
<dbReference type="GO" id="GO:0043023">
    <property type="term" value="F:ribosomal large subunit binding"/>
    <property type="evidence" value="ECO:0007669"/>
    <property type="project" value="TreeGrafter"/>
</dbReference>
<dbReference type="GO" id="GO:0002184">
    <property type="term" value="P:cytoplasmic translational termination"/>
    <property type="evidence" value="ECO:0007669"/>
    <property type="project" value="TreeGrafter"/>
</dbReference>
<dbReference type="CDD" id="cd00520">
    <property type="entry name" value="RRF"/>
    <property type="match status" value="1"/>
</dbReference>
<dbReference type="FunFam" id="1.10.132.20:FF:000001">
    <property type="entry name" value="Ribosome-recycling factor"/>
    <property type="match status" value="1"/>
</dbReference>
<dbReference type="FunFam" id="3.30.1360.40:FF:000001">
    <property type="entry name" value="Ribosome-recycling factor"/>
    <property type="match status" value="1"/>
</dbReference>
<dbReference type="Gene3D" id="3.30.1360.40">
    <property type="match status" value="1"/>
</dbReference>
<dbReference type="Gene3D" id="1.10.132.20">
    <property type="entry name" value="Ribosome-recycling factor"/>
    <property type="match status" value="1"/>
</dbReference>
<dbReference type="HAMAP" id="MF_00040">
    <property type="entry name" value="RRF"/>
    <property type="match status" value="1"/>
</dbReference>
<dbReference type="InterPro" id="IPR002661">
    <property type="entry name" value="Ribosome_recyc_fac"/>
</dbReference>
<dbReference type="InterPro" id="IPR023584">
    <property type="entry name" value="Ribosome_recyc_fac_dom"/>
</dbReference>
<dbReference type="InterPro" id="IPR036191">
    <property type="entry name" value="RRF_sf"/>
</dbReference>
<dbReference type="NCBIfam" id="TIGR00496">
    <property type="entry name" value="frr"/>
    <property type="match status" value="1"/>
</dbReference>
<dbReference type="PANTHER" id="PTHR20982:SF3">
    <property type="entry name" value="MITOCHONDRIAL RIBOSOME RECYCLING FACTOR PSEUDO 1"/>
    <property type="match status" value="1"/>
</dbReference>
<dbReference type="PANTHER" id="PTHR20982">
    <property type="entry name" value="RIBOSOME RECYCLING FACTOR"/>
    <property type="match status" value="1"/>
</dbReference>
<dbReference type="Pfam" id="PF01765">
    <property type="entry name" value="RRF"/>
    <property type="match status" value="1"/>
</dbReference>
<dbReference type="SUPFAM" id="SSF55194">
    <property type="entry name" value="Ribosome recycling factor, RRF"/>
    <property type="match status" value="1"/>
</dbReference>
<accession>B7V7G0</accession>